<reference key="1">
    <citation type="journal article" date="2015" name="Genome Announc.">
        <title>Draft genome sequence of the cellulolytic fungus Chaetomium globosum.</title>
        <authorList>
            <person name="Cuomo C.A."/>
            <person name="Untereiner W.A."/>
            <person name="Ma L.-J."/>
            <person name="Grabherr M."/>
            <person name="Birren B.W."/>
        </authorList>
    </citation>
    <scope>NUCLEOTIDE SEQUENCE [LARGE SCALE GENOMIC DNA]</scope>
    <source>
        <strain>ATCC 6205 / CBS 148.51 / DSM 1962 / NBRC 6347 / NRRL 1970</strain>
    </source>
</reference>
<accession>Q2HH63</accession>
<feature type="chain" id="PRO_0000295484" description="Protein transport protein SEC24">
    <location>
        <begin position="1"/>
        <end position="947"/>
    </location>
</feature>
<feature type="region of interest" description="Disordered" evidence="2">
    <location>
        <begin position="1"/>
        <end position="51"/>
    </location>
</feature>
<feature type="region of interest" description="Zinc finger-like">
    <location>
        <begin position="271"/>
        <end position="296"/>
    </location>
</feature>
<feature type="compositionally biased region" description="Pro residues" evidence="2">
    <location>
        <begin position="13"/>
        <end position="23"/>
    </location>
</feature>
<feature type="binding site" evidence="1">
    <location>
        <position position="271"/>
    </location>
    <ligand>
        <name>Zn(2+)</name>
        <dbReference type="ChEBI" id="CHEBI:29105"/>
    </ligand>
</feature>
<feature type="binding site" evidence="1">
    <location>
        <position position="274"/>
    </location>
    <ligand>
        <name>Zn(2+)</name>
        <dbReference type="ChEBI" id="CHEBI:29105"/>
    </ligand>
</feature>
<feature type="binding site" evidence="1">
    <location>
        <position position="293"/>
    </location>
    <ligand>
        <name>Zn(2+)</name>
        <dbReference type="ChEBI" id="CHEBI:29105"/>
    </ligand>
</feature>
<feature type="binding site" evidence="1">
    <location>
        <position position="296"/>
    </location>
    <ligand>
        <name>Zn(2+)</name>
        <dbReference type="ChEBI" id="CHEBI:29105"/>
    </ligand>
</feature>
<keyword id="KW-0963">Cytoplasm</keyword>
<keyword id="KW-0968">Cytoplasmic vesicle</keyword>
<keyword id="KW-0256">Endoplasmic reticulum</keyword>
<keyword id="KW-0931">ER-Golgi transport</keyword>
<keyword id="KW-0333">Golgi apparatus</keyword>
<keyword id="KW-0472">Membrane</keyword>
<keyword id="KW-0479">Metal-binding</keyword>
<keyword id="KW-0653">Protein transport</keyword>
<keyword id="KW-1185">Reference proteome</keyword>
<keyword id="KW-0813">Transport</keyword>
<keyword id="KW-0862">Zinc</keyword>
<evidence type="ECO:0000250" key="1"/>
<evidence type="ECO:0000256" key="2">
    <source>
        <dbReference type="SAM" id="MobiDB-lite"/>
    </source>
</evidence>
<evidence type="ECO:0000305" key="3"/>
<organism>
    <name type="scientific">Chaetomium globosum (strain ATCC 6205 / CBS 148.51 / DSM 1962 / NBRC 6347 / NRRL 1970)</name>
    <name type="common">Soil fungus</name>
    <dbReference type="NCBI Taxonomy" id="306901"/>
    <lineage>
        <taxon>Eukaryota</taxon>
        <taxon>Fungi</taxon>
        <taxon>Dikarya</taxon>
        <taxon>Ascomycota</taxon>
        <taxon>Pezizomycotina</taxon>
        <taxon>Sordariomycetes</taxon>
        <taxon>Sordariomycetidae</taxon>
        <taxon>Sordariales</taxon>
        <taxon>Chaetomiaceae</taxon>
        <taxon>Chaetomium</taxon>
    </lineage>
</organism>
<gene>
    <name type="primary">SEC24</name>
    <name type="ORF">CHGG_00441</name>
</gene>
<dbReference type="EMBL" id="CH408029">
    <property type="protein sequence ID" value="EAQ92206.1"/>
    <property type="molecule type" value="Genomic_DNA"/>
</dbReference>
<dbReference type="RefSeq" id="XP_001219662.1">
    <property type="nucleotide sequence ID" value="XM_001219661.1"/>
</dbReference>
<dbReference type="SMR" id="Q2HH63"/>
<dbReference type="FunCoup" id="Q2HH63">
    <property type="interactions" value="783"/>
</dbReference>
<dbReference type="STRING" id="306901.Q2HH63"/>
<dbReference type="GeneID" id="4388273"/>
<dbReference type="VEuPathDB" id="FungiDB:CHGG_00441"/>
<dbReference type="eggNOG" id="KOG1985">
    <property type="taxonomic scope" value="Eukaryota"/>
</dbReference>
<dbReference type="HOGENOM" id="CLU_004589_2_1_1"/>
<dbReference type="InParanoid" id="Q2HH63"/>
<dbReference type="OMA" id="AVECSKQ"/>
<dbReference type="OrthoDB" id="49016at2759"/>
<dbReference type="Proteomes" id="UP000001056">
    <property type="component" value="Unassembled WGS sequence"/>
</dbReference>
<dbReference type="GO" id="GO:0005801">
    <property type="term" value="C:cis-Golgi network"/>
    <property type="evidence" value="ECO:0007669"/>
    <property type="project" value="EnsemblFungi"/>
</dbReference>
<dbReference type="GO" id="GO:0030127">
    <property type="term" value="C:COPII vesicle coat"/>
    <property type="evidence" value="ECO:0007669"/>
    <property type="project" value="InterPro"/>
</dbReference>
<dbReference type="GO" id="GO:0070971">
    <property type="term" value="C:endoplasmic reticulum exit site"/>
    <property type="evidence" value="ECO:0007669"/>
    <property type="project" value="EnsemblFungi"/>
</dbReference>
<dbReference type="GO" id="GO:0005789">
    <property type="term" value="C:endoplasmic reticulum membrane"/>
    <property type="evidence" value="ECO:0007669"/>
    <property type="project" value="UniProtKB-SubCell"/>
</dbReference>
<dbReference type="GO" id="GO:1990753">
    <property type="term" value="C:equatorial cell cortex"/>
    <property type="evidence" value="ECO:0007669"/>
    <property type="project" value="EnsemblFungi"/>
</dbReference>
<dbReference type="GO" id="GO:0000139">
    <property type="term" value="C:Golgi membrane"/>
    <property type="evidence" value="ECO:0007669"/>
    <property type="project" value="UniProtKB-SubCell"/>
</dbReference>
<dbReference type="GO" id="GO:0000149">
    <property type="term" value="F:SNARE binding"/>
    <property type="evidence" value="ECO:0007669"/>
    <property type="project" value="TreeGrafter"/>
</dbReference>
<dbReference type="GO" id="GO:0008270">
    <property type="term" value="F:zinc ion binding"/>
    <property type="evidence" value="ECO:0007669"/>
    <property type="project" value="InterPro"/>
</dbReference>
<dbReference type="GO" id="GO:0090110">
    <property type="term" value="P:COPII-coated vesicle cargo loading"/>
    <property type="evidence" value="ECO:0007669"/>
    <property type="project" value="TreeGrafter"/>
</dbReference>
<dbReference type="GO" id="GO:0006886">
    <property type="term" value="P:intracellular protein transport"/>
    <property type="evidence" value="ECO:0007669"/>
    <property type="project" value="InterPro"/>
</dbReference>
<dbReference type="CDD" id="cd01479">
    <property type="entry name" value="Sec24-like"/>
    <property type="match status" value="1"/>
</dbReference>
<dbReference type="Gene3D" id="2.60.40.1670">
    <property type="entry name" value="beta-sandwich domain of Sec23/24"/>
    <property type="match status" value="1"/>
</dbReference>
<dbReference type="Gene3D" id="1.20.120.730">
    <property type="entry name" value="Sec23/Sec24 helical domain"/>
    <property type="match status" value="1"/>
</dbReference>
<dbReference type="Gene3D" id="3.40.20.10">
    <property type="entry name" value="Severin"/>
    <property type="match status" value="1"/>
</dbReference>
<dbReference type="Gene3D" id="3.40.50.410">
    <property type="entry name" value="von Willebrand factor, type A domain"/>
    <property type="match status" value="1"/>
</dbReference>
<dbReference type="Gene3D" id="2.30.30.380">
    <property type="entry name" value="Zn-finger domain of Sec23/24"/>
    <property type="match status" value="1"/>
</dbReference>
<dbReference type="InterPro" id="IPR029006">
    <property type="entry name" value="ADF-H/Gelsolin-like_dom_sf"/>
</dbReference>
<dbReference type="InterPro" id="IPR007123">
    <property type="entry name" value="Gelsolin-like_dom"/>
</dbReference>
<dbReference type="InterPro" id="IPR036180">
    <property type="entry name" value="Gelsolin-like_dom_sf"/>
</dbReference>
<dbReference type="InterPro" id="IPR006900">
    <property type="entry name" value="Sec23/24_helical_dom"/>
</dbReference>
<dbReference type="InterPro" id="IPR036175">
    <property type="entry name" value="Sec23/24_helical_dom_sf"/>
</dbReference>
<dbReference type="InterPro" id="IPR006896">
    <property type="entry name" value="Sec23/24_trunk_dom"/>
</dbReference>
<dbReference type="InterPro" id="IPR012990">
    <property type="entry name" value="Sec23_24_beta_S"/>
</dbReference>
<dbReference type="InterPro" id="IPR050550">
    <property type="entry name" value="SEC23_SEC24_subfamily"/>
</dbReference>
<dbReference type="InterPro" id="IPR041742">
    <property type="entry name" value="Sec24-like_trunk_dom"/>
</dbReference>
<dbReference type="InterPro" id="IPR036465">
    <property type="entry name" value="vWFA_dom_sf"/>
</dbReference>
<dbReference type="InterPro" id="IPR006895">
    <property type="entry name" value="Znf_Sec23_Sec24"/>
</dbReference>
<dbReference type="InterPro" id="IPR036174">
    <property type="entry name" value="Znf_Sec23_Sec24_sf"/>
</dbReference>
<dbReference type="PANTHER" id="PTHR13803">
    <property type="entry name" value="SEC24-RELATED PROTEIN"/>
    <property type="match status" value="1"/>
</dbReference>
<dbReference type="PANTHER" id="PTHR13803:SF39">
    <property type="entry name" value="SECRETORY 24AB, ISOFORM A"/>
    <property type="match status" value="1"/>
</dbReference>
<dbReference type="Pfam" id="PF00626">
    <property type="entry name" value="Gelsolin"/>
    <property type="match status" value="1"/>
</dbReference>
<dbReference type="Pfam" id="PF08033">
    <property type="entry name" value="Sec23_BS"/>
    <property type="match status" value="1"/>
</dbReference>
<dbReference type="Pfam" id="PF04815">
    <property type="entry name" value="Sec23_helical"/>
    <property type="match status" value="1"/>
</dbReference>
<dbReference type="Pfam" id="PF04811">
    <property type="entry name" value="Sec23_trunk"/>
    <property type="match status" value="1"/>
</dbReference>
<dbReference type="Pfam" id="PF04810">
    <property type="entry name" value="zf-Sec23_Sec24"/>
    <property type="match status" value="1"/>
</dbReference>
<dbReference type="SUPFAM" id="SSF81995">
    <property type="entry name" value="beta-sandwich domain of Sec23/24"/>
    <property type="match status" value="1"/>
</dbReference>
<dbReference type="SUPFAM" id="SSF82754">
    <property type="entry name" value="C-terminal, gelsolin-like domain of Sec23/24"/>
    <property type="match status" value="1"/>
</dbReference>
<dbReference type="SUPFAM" id="SSF81811">
    <property type="entry name" value="Helical domain of Sec23/24"/>
    <property type="match status" value="1"/>
</dbReference>
<dbReference type="SUPFAM" id="SSF53300">
    <property type="entry name" value="vWA-like"/>
    <property type="match status" value="1"/>
</dbReference>
<dbReference type="SUPFAM" id="SSF82919">
    <property type="entry name" value="Zn-finger domain of Sec23/24"/>
    <property type="match status" value="1"/>
</dbReference>
<name>SEC24_CHAGB</name>
<sequence length="947" mass="103085">MSAPHDGYGQFPPQQPTEQPPYPDQGYANPADAPPPAAGAPHAADHGKKKKRAYAAGAFDVAAGGNAAVGGQVQGGGQFGAPAPGYGGYPQPEAQPATYGAQPAAYGAQPQQPYGMPAPAPAVGYQAPEPYYPSAGAPPVPGDVAGLASGMSAMNLGPGAHQQPQQVPAQGRVGPLNQLYPTDLLNQPFNVSELDLPPPPIILPPNSSVTPSPDANCLPKYVRSTVNAIPTTHSLLKKSKLPLALIIQPYAALHDLDDPVPVVQDQVISRCRRCRSYINPFVTFLDHGHRWRCNMCNLTNDVPQAFDWDAAAQKTVDRWQRHELNHAVVEFVAPQEYMVRPPQPLVYLFLFDVSYAAVSTGLLATSARTILDSLNRIPNADRRTRLGFIAVDSSLHYFSVPKDSDENGETSMLVVSDLDEPFLPVPQELLVPLTECRNSIENFLTKLPEMFANNQNNGSCMGSALRAGHKLISPLGGKIVVLSASLPNVGYGKLEMREDKKLLGTSKENGLLQTANSFYKSFAVECSKNQVSIDMFLFSSQYQDVASLSNLPRYTGGQTWFYPGWNAGRPEDAIKFASEFSDFLSSEIGLEAVLRVRATTGLRMSTFYGNFFNRSSDLCAFPAFPRDQCYVVEVAIDENLTKNVVCLQTAVLHTTCNGERRIRVMTLALPTTTNLADVYASADQCAITTYYSHKAVEKALGSGLDSARDMLQSKVTELLQTFRKELAGGSMGGGLQFPSNLRGLPALFLGLIKHVGLRKSAQIPSDLRSAALCMLSTLPLPLLMQYIYPRLYSLHDMPDNAGYPDPETSQIVLPPPLNLSSERFVPFGLYLIDDGQTQFLWVGRDAVPQLLVDVFGVTDRAQLRVGKGALPELDNDFNERVRAVALKSRDHKAKGVGSIIVPHLYIVREDGEPSLKLWAQTLLVEDRADQGMSYQQWMGTLREKVST</sequence>
<comment type="function">
    <text evidence="1">Component of the coat protein complex II (COPII) which promotes the formation of transport vesicles from the endoplasmic reticulum (ER). The coat has two main functions, the physical deformation of the endoplasmic reticulum membrane into vesicles and the selection of cargo molecules (By similarity).</text>
</comment>
<comment type="subunit">
    <text evidence="1">The COPII coat is composed of at least 5 proteins: the SEC23/24 complex, the SEC13/31 complex, and the protein SAR1. Golgi apparatus membrane; Peripheral membrane protein; Cytoplasmic side.</text>
</comment>
<comment type="subcellular location">
    <subcellularLocation>
        <location evidence="1">Cytoplasm</location>
    </subcellularLocation>
    <subcellularLocation>
        <location evidence="1">Cytoplasmic vesicle</location>
        <location evidence="1">COPII-coated vesicle membrane</location>
        <topology evidence="1">Peripheral membrane protein</topology>
        <orientation evidence="1">Cytoplasmic side</orientation>
    </subcellularLocation>
    <subcellularLocation>
        <location evidence="1">Endoplasmic reticulum membrane</location>
        <topology evidence="1">Peripheral membrane protein</topology>
        <orientation evidence="1">Cytoplasmic side</orientation>
    </subcellularLocation>
    <subcellularLocation>
        <location evidence="1">Golgi apparatus membrane</location>
        <topology evidence="1">Peripheral membrane protein</topology>
        <orientation evidence="1">Cytoplasmic side</orientation>
    </subcellularLocation>
</comment>
<comment type="similarity">
    <text evidence="3">Belongs to the SEC23/SEC24 family. SEC24 subfamily.</text>
</comment>
<proteinExistence type="inferred from homology"/>
<protein>
    <recommendedName>
        <fullName>Protein transport protein SEC24</fullName>
    </recommendedName>
</protein>